<evidence type="ECO:0000255" key="1">
    <source>
        <dbReference type="HAMAP-Rule" id="MF_01325"/>
    </source>
</evidence>
<evidence type="ECO:0000305" key="2"/>
<keyword id="KW-1185">Reference proteome</keyword>
<keyword id="KW-0687">Ribonucleoprotein</keyword>
<keyword id="KW-0689">Ribosomal protein</keyword>
<keyword id="KW-0694">RNA-binding</keyword>
<keyword id="KW-0699">rRNA-binding</keyword>
<sequence length="220" mass="23680">MTKGILGRKIGMTQVFGENGDLIPVTVVEAGQNVVLQKKTEEVDGYNAIQVGFEDKQAYKKDSKSNKYANKPAEGHAKKAGTAPKRFIREFKNINVDEYEVGQEVSVDTFEAGDIIDVTGVSKGKGFQGNIKRHGHARGPMAHGSHFHRAPGSVGMASDASKVFKGHKMPGRMGGNTVTVQNLEVVQIDAENNVILVKGNVPGPKKGLVEIKTSIKKGNK</sequence>
<proteinExistence type="inferred from homology"/>
<organism>
    <name type="scientific">Staphylococcus carnosus (strain TM300)</name>
    <dbReference type="NCBI Taxonomy" id="396513"/>
    <lineage>
        <taxon>Bacteria</taxon>
        <taxon>Bacillati</taxon>
        <taxon>Bacillota</taxon>
        <taxon>Bacilli</taxon>
        <taxon>Bacillales</taxon>
        <taxon>Staphylococcaceae</taxon>
        <taxon>Staphylococcus</taxon>
    </lineage>
</organism>
<accession>B9DM19</accession>
<name>RL3_STACT</name>
<protein>
    <recommendedName>
        <fullName evidence="1">Large ribosomal subunit protein uL3</fullName>
    </recommendedName>
    <alternativeName>
        <fullName evidence="2">50S ribosomal protein L3</fullName>
    </alternativeName>
</protein>
<gene>
    <name evidence="1" type="primary">rplC</name>
    <name type="ordered locus">Sca_1735</name>
</gene>
<dbReference type="EMBL" id="AM295250">
    <property type="protein sequence ID" value="CAL28641.1"/>
    <property type="molecule type" value="Genomic_DNA"/>
</dbReference>
<dbReference type="RefSeq" id="WP_015900977.1">
    <property type="nucleotide sequence ID" value="NC_012121.1"/>
</dbReference>
<dbReference type="SMR" id="B9DM19"/>
<dbReference type="GeneID" id="93794194"/>
<dbReference type="KEGG" id="sca:SCA_1735"/>
<dbReference type="eggNOG" id="COG0087">
    <property type="taxonomic scope" value="Bacteria"/>
</dbReference>
<dbReference type="HOGENOM" id="CLU_044142_4_1_9"/>
<dbReference type="OrthoDB" id="9806135at2"/>
<dbReference type="BioCyc" id="SCAR396513:SCA_RS08840-MONOMER"/>
<dbReference type="Proteomes" id="UP000000444">
    <property type="component" value="Chromosome"/>
</dbReference>
<dbReference type="GO" id="GO:0022625">
    <property type="term" value="C:cytosolic large ribosomal subunit"/>
    <property type="evidence" value="ECO:0007669"/>
    <property type="project" value="TreeGrafter"/>
</dbReference>
<dbReference type="GO" id="GO:0019843">
    <property type="term" value="F:rRNA binding"/>
    <property type="evidence" value="ECO:0007669"/>
    <property type="project" value="UniProtKB-UniRule"/>
</dbReference>
<dbReference type="GO" id="GO:0003735">
    <property type="term" value="F:structural constituent of ribosome"/>
    <property type="evidence" value="ECO:0007669"/>
    <property type="project" value="InterPro"/>
</dbReference>
<dbReference type="GO" id="GO:0006412">
    <property type="term" value="P:translation"/>
    <property type="evidence" value="ECO:0007669"/>
    <property type="project" value="UniProtKB-UniRule"/>
</dbReference>
<dbReference type="FunFam" id="2.40.30.10:FF:000004">
    <property type="entry name" value="50S ribosomal protein L3"/>
    <property type="match status" value="1"/>
</dbReference>
<dbReference type="FunFam" id="3.30.160.810:FF:000002">
    <property type="entry name" value="50S ribosomal protein L3"/>
    <property type="match status" value="1"/>
</dbReference>
<dbReference type="Gene3D" id="3.30.160.810">
    <property type="match status" value="1"/>
</dbReference>
<dbReference type="Gene3D" id="2.40.30.10">
    <property type="entry name" value="Translation factors"/>
    <property type="match status" value="1"/>
</dbReference>
<dbReference type="HAMAP" id="MF_01325_B">
    <property type="entry name" value="Ribosomal_uL3_B"/>
    <property type="match status" value="1"/>
</dbReference>
<dbReference type="InterPro" id="IPR000597">
    <property type="entry name" value="Ribosomal_uL3"/>
</dbReference>
<dbReference type="InterPro" id="IPR019927">
    <property type="entry name" value="Ribosomal_uL3_bac/org-type"/>
</dbReference>
<dbReference type="InterPro" id="IPR019926">
    <property type="entry name" value="Ribosomal_uL3_CS"/>
</dbReference>
<dbReference type="InterPro" id="IPR009000">
    <property type="entry name" value="Transl_B-barrel_sf"/>
</dbReference>
<dbReference type="NCBIfam" id="TIGR03625">
    <property type="entry name" value="L3_bact"/>
    <property type="match status" value="1"/>
</dbReference>
<dbReference type="PANTHER" id="PTHR11229">
    <property type="entry name" value="50S RIBOSOMAL PROTEIN L3"/>
    <property type="match status" value="1"/>
</dbReference>
<dbReference type="PANTHER" id="PTHR11229:SF16">
    <property type="entry name" value="LARGE RIBOSOMAL SUBUNIT PROTEIN UL3C"/>
    <property type="match status" value="1"/>
</dbReference>
<dbReference type="Pfam" id="PF00297">
    <property type="entry name" value="Ribosomal_L3"/>
    <property type="match status" value="1"/>
</dbReference>
<dbReference type="SUPFAM" id="SSF50447">
    <property type="entry name" value="Translation proteins"/>
    <property type="match status" value="1"/>
</dbReference>
<dbReference type="PROSITE" id="PS00474">
    <property type="entry name" value="RIBOSOMAL_L3"/>
    <property type="match status" value="1"/>
</dbReference>
<feature type="chain" id="PRO_1000165904" description="Large ribosomal subunit protein uL3">
    <location>
        <begin position="1"/>
        <end position="220"/>
    </location>
</feature>
<reference key="1">
    <citation type="journal article" date="2009" name="Appl. Environ. Microbiol.">
        <title>Genome analysis of the meat starter culture bacterium Staphylococcus carnosus TM300.</title>
        <authorList>
            <person name="Rosenstein R."/>
            <person name="Nerz C."/>
            <person name="Biswas L."/>
            <person name="Resch A."/>
            <person name="Raddatz G."/>
            <person name="Schuster S.C."/>
            <person name="Goetz F."/>
        </authorList>
    </citation>
    <scope>NUCLEOTIDE SEQUENCE [LARGE SCALE GENOMIC DNA]</scope>
    <source>
        <strain>TM300</strain>
    </source>
</reference>
<comment type="function">
    <text evidence="1">One of the primary rRNA binding proteins, it binds directly near the 3'-end of the 23S rRNA, where it nucleates assembly of the 50S subunit.</text>
</comment>
<comment type="subunit">
    <text evidence="1">Part of the 50S ribosomal subunit. Forms a cluster with proteins L14 and L19.</text>
</comment>
<comment type="similarity">
    <text evidence="1">Belongs to the universal ribosomal protein uL3 family.</text>
</comment>